<evidence type="ECO:0000250" key="1"/>
<evidence type="ECO:0000255" key="2"/>
<evidence type="ECO:0000305" key="3"/>
<reference key="1">
    <citation type="journal article" date="2006" name="Nature">
        <title>Insights from the genome of the biotrophic fungal plant pathogen Ustilago maydis.</title>
        <authorList>
            <person name="Kaemper J."/>
            <person name="Kahmann R."/>
            <person name="Boelker M."/>
            <person name="Ma L.-J."/>
            <person name="Brefort T."/>
            <person name="Saville B.J."/>
            <person name="Banuett F."/>
            <person name="Kronstad J.W."/>
            <person name="Gold S.E."/>
            <person name="Mueller O."/>
            <person name="Perlin M.H."/>
            <person name="Woesten H.A.B."/>
            <person name="de Vries R."/>
            <person name="Ruiz-Herrera J."/>
            <person name="Reynaga-Pena C.G."/>
            <person name="Snetselaar K."/>
            <person name="McCann M."/>
            <person name="Perez-Martin J."/>
            <person name="Feldbruegge M."/>
            <person name="Basse C.W."/>
            <person name="Steinberg G."/>
            <person name="Ibeas J.I."/>
            <person name="Holloman W."/>
            <person name="Guzman P."/>
            <person name="Farman M.L."/>
            <person name="Stajich J.E."/>
            <person name="Sentandreu R."/>
            <person name="Gonzalez-Prieto J.M."/>
            <person name="Kennell J.C."/>
            <person name="Molina L."/>
            <person name="Schirawski J."/>
            <person name="Mendoza-Mendoza A."/>
            <person name="Greilinger D."/>
            <person name="Muench K."/>
            <person name="Roessel N."/>
            <person name="Scherer M."/>
            <person name="Vranes M."/>
            <person name="Ladendorf O."/>
            <person name="Vincon V."/>
            <person name="Fuchs U."/>
            <person name="Sandrock B."/>
            <person name="Meng S."/>
            <person name="Ho E.C.H."/>
            <person name="Cahill M.J."/>
            <person name="Boyce K.J."/>
            <person name="Klose J."/>
            <person name="Klosterman S.J."/>
            <person name="Deelstra H.J."/>
            <person name="Ortiz-Castellanos L."/>
            <person name="Li W."/>
            <person name="Sanchez-Alonso P."/>
            <person name="Schreier P.H."/>
            <person name="Haeuser-Hahn I."/>
            <person name="Vaupel M."/>
            <person name="Koopmann E."/>
            <person name="Friedrich G."/>
            <person name="Voss H."/>
            <person name="Schlueter T."/>
            <person name="Margolis J."/>
            <person name="Platt D."/>
            <person name="Swimmer C."/>
            <person name="Gnirke A."/>
            <person name="Chen F."/>
            <person name="Vysotskaia V."/>
            <person name="Mannhaupt G."/>
            <person name="Gueldener U."/>
            <person name="Muensterkoetter M."/>
            <person name="Haase D."/>
            <person name="Oesterheld M."/>
            <person name="Mewes H.-W."/>
            <person name="Mauceli E.W."/>
            <person name="DeCaprio D."/>
            <person name="Wade C.M."/>
            <person name="Butler J."/>
            <person name="Young S.K."/>
            <person name="Jaffe D.B."/>
            <person name="Calvo S.E."/>
            <person name="Nusbaum C."/>
            <person name="Galagan J.E."/>
            <person name="Birren B.W."/>
        </authorList>
    </citation>
    <scope>NUCLEOTIDE SEQUENCE [LARGE SCALE GENOMIC DNA]</scope>
    <source>
        <strain>DSM 14603 / FGSC 9021 / UM521</strain>
    </source>
</reference>
<reference key="2">
    <citation type="submission" date="2014-09" db="EMBL/GenBank/DDBJ databases">
        <authorList>
            <person name="Gueldener U."/>
            <person name="Muensterkoetter M."/>
            <person name="Walter M.C."/>
            <person name="Mannhaupt G."/>
            <person name="Kahmann R."/>
        </authorList>
    </citation>
    <scope>GENOME REANNOTATION</scope>
    <source>
        <strain>DSM 14603 / FGSC 9021 / UM521</strain>
    </source>
</reference>
<dbReference type="EMBL" id="CM003147">
    <property type="protein sequence ID" value="KIS68633.1"/>
    <property type="molecule type" value="Genomic_DNA"/>
</dbReference>
<dbReference type="RefSeq" id="XP_011389644.1">
    <property type="nucleotide sequence ID" value="XM_011391342.1"/>
</dbReference>
<dbReference type="STRING" id="237631.Q4P9K6"/>
<dbReference type="EnsemblFungi" id="KIS68633">
    <property type="protein sequence ID" value="KIS68633"/>
    <property type="gene ID" value="UMAG_03207"/>
</dbReference>
<dbReference type="GeneID" id="23563732"/>
<dbReference type="KEGG" id="uma:UMAG_03207"/>
<dbReference type="VEuPathDB" id="FungiDB:UMAG_03207"/>
<dbReference type="eggNOG" id="KOG1944">
    <property type="taxonomic scope" value="Eukaryota"/>
</dbReference>
<dbReference type="HOGENOM" id="CLU_049109_8_1_1"/>
<dbReference type="InParanoid" id="Q4P9K6"/>
<dbReference type="OMA" id="CAPTMIG"/>
<dbReference type="OrthoDB" id="430207at2759"/>
<dbReference type="Proteomes" id="UP000000561">
    <property type="component" value="Chromosome 8"/>
</dbReference>
<dbReference type="GO" id="GO:0005737">
    <property type="term" value="C:cytoplasm"/>
    <property type="evidence" value="ECO:0000318"/>
    <property type="project" value="GO_Central"/>
</dbReference>
<dbReference type="GO" id="GO:0005743">
    <property type="term" value="C:mitochondrial inner membrane"/>
    <property type="evidence" value="ECO:0007669"/>
    <property type="project" value="UniProtKB-SubCell"/>
</dbReference>
<dbReference type="GO" id="GO:0005739">
    <property type="term" value="C:mitochondrion"/>
    <property type="evidence" value="ECO:0000318"/>
    <property type="project" value="GO_Central"/>
</dbReference>
<dbReference type="GO" id="GO:0006067">
    <property type="term" value="P:ethanol metabolic process"/>
    <property type="evidence" value="ECO:0007669"/>
    <property type="project" value="EnsemblFungi"/>
</dbReference>
<dbReference type="InterPro" id="IPR007248">
    <property type="entry name" value="Mpv17_PMP22"/>
</dbReference>
<dbReference type="PANTHER" id="PTHR11266">
    <property type="entry name" value="PEROXISOMAL MEMBRANE PROTEIN 2, PXMP2 MPV17"/>
    <property type="match status" value="1"/>
</dbReference>
<dbReference type="PANTHER" id="PTHR11266:SF17">
    <property type="entry name" value="PROTEIN MPV17"/>
    <property type="match status" value="1"/>
</dbReference>
<dbReference type="Pfam" id="PF04117">
    <property type="entry name" value="Mpv17_PMP22"/>
    <property type="match status" value="1"/>
</dbReference>
<feature type="chain" id="PRO_0000234415" description="Protein SYM1">
    <location>
        <begin position="1"/>
        <end position="199"/>
    </location>
</feature>
<feature type="transmembrane region" description="Helical" evidence="2">
    <location>
        <begin position="52"/>
        <end position="72"/>
    </location>
</feature>
<feature type="transmembrane region" description="Helical" evidence="2">
    <location>
        <begin position="93"/>
        <end position="113"/>
    </location>
</feature>
<feature type="transmembrane region" description="Helical" evidence="2">
    <location>
        <begin position="130"/>
        <end position="150"/>
    </location>
</feature>
<feature type="transmembrane region" description="Helical" evidence="2">
    <location>
        <begin position="154"/>
        <end position="174"/>
    </location>
</feature>
<proteinExistence type="inferred from homology"/>
<accession>Q4P9K6</accession>
<accession>A0A0D1CPV0</accession>
<sequence length="199" mass="21833">MSTFTRLIAATSSTFPRQCLTGGVLFATGDTIAQQLVEKRGSRHDLARTFRLSLYGGCVFSPLASIWFGRVLERVRFSSKAANIATKVALDQAIASPAFVALFFGATTIMEGGSPDQAKNKIIHNWWPTLKTAWGLWIPVQTLNMALVPPSQRLLFVNVVSIFWNTFLSIKSAAASDHAVKPNLNDAVELVETKLDKLH</sequence>
<protein>
    <recommendedName>
        <fullName>Protein SYM1</fullName>
    </recommendedName>
</protein>
<name>SYM1_MYCMD</name>
<comment type="function">
    <text evidence="1">May be involved in cellular response to stress. Required to maintain mitochondrial DNA (mtDNA) integrity and stability (By similarity).</text>
</comment>
<comment type="subcellular location">
    <subcellularLocation>
        <location evidence="1">Mitochondrion inner membrane</location>
        <topology evidence="1">Multi-pass membrane protein</topology>
    </subcellularLocation>
</comment>
<comment type="similarity">
    <text evidence="3">Belongs to the peroxisomal membrane protein PXMP2/4 family.</text>
</comment>
<gene>
    <name type="primary">SYM1</name>
    <name type="ORF">UMAG_03207</name>
</gene>
<organism>
    <name type="scientific">Mycosarcoma maydis</name>
    <name type="common">Corn smut fungus</name>
    <name type="synonym">Ustilago maydis</name>
    <dbReference type="NCBI Taxonomy" id="5270"/>
    <lineage>
        <taxon>Eukaryota</taxon>
        <taxon>Fungi</taxon>
        <taxon>Dikarya</taxon>
        <taxon>Basidiomycota</taxon>
        <taxon>Ustilaginomycotina</taxon>
        <taxon>Ustilaginomycetes</taxon>
        <taxon>Ustilaginales</taxon>
        <taxon>Ustilaginaceae</taxon>
        <taxon>Mycosarcoma</taxon>
    </lineage>
</organism>
<keyword id="KW-0472">Membrane</keyword>
<keyword id="KW-0496">Mitochondrion</keyword>
<keyword id="KW-0999">Mitochondrion inner membrane</keyword>
<keyword id="KW-1185">Reference proteome</keyword>
<keyword id="KW-0812">Transmembrane</keyword>
<keyword id="KW-1133">Transmembrane helix</keyword>